<accession>A8L6C8</accession>
<feature type="chain" id="PRO_1000091240" description="UPF0102 protein Franean1_1156">
    <location>
        <begin position="1"/>
        <end position="118"/>
    </location>
</feature>
<name>Y1156_PARS2</name>
<dbReference type="EMBL" id="CP000820">
    <property type="protein sequence ID" value="ABW10610.1"/>
    <property type="molecule type" value="Genomic_DNA"/>
</dbReference>
<dbReference type="RefSeq" id="WP_020458786.1">
    <property type="nucleotide sequence ID" value="NC_009921.1"/>
</dbReference>
<dbReference type="SMR" id="A8L6C8"/>
<dbReference type="STRING" id="298653.Franean1_1156"/>
<dbReference type="KEGG" id="fre:Franean1_1156"/>
<dbReference type="eggNOG" id="COG0792">
    <property type="taxonomic scope" value="Bacteria"/>
</dbReference>
<dbReference type="HOGENOM" id="CLU_115353_2_3_11"/>
<dbReference type="GO" id="GO:0003676">
    <property type="term" value="F:nucleic acid binding"/>
    <property type="evidence" value="ECO:0007669"/>
    <property type="project" value="InterPro"/>
</dbReference>
<dbReference type="CDD" id="cd20736">
    <property type="entry name" value="PoNe_Nuclease"/>
    <property type="match status" value="1"/>
</dbReference>
<dbReference type="Gene3D" id="3.40.1350.10">
    <property type="match status" value="1"/>
</dbReference>
<dbReference type="HAMAP" id="MF_00048">
    <property type="entry name" value="UPF0102"/>
    <property type="match status" value="1"/>
</dbReference>
<dbReference type="InterPro" id="IPR011335">
    <property type="entry name" value="Restrct_endonuc-II-like"/>
</dbReference>
<dbReference type="InterPro" id="IPR011856">
    <property type="entry name" value="tRNA_endonuc-like_dom_sf"/>
</dbReference>
<dbReference type="InterPro" id="IPR003509">
    <property type="entry name" value="UPF0102_YraN-like"/>
</dbReference>
<dbReference type="NCBIfam" id="NF009150">
    <property type="entry name" value="PRK12497.1-3"/>
    <property type="match status" value="1"/>
</dbReference>
<dbReference type="NCBIfam" id="NF009154">
    <property type="entry name" value="PRK12497.3-3"/>
    <property type="match status" value="1"/>
</dbReference>
<dbReference type="NCBIfam" id="TIGR00252">
    <property type="entry name" value="YraN family protein"/>
    <property type="match status" value="1"/>
</dbReference>
<dbReference type="PANTHER" id="PTHR34039">
    <property type="entry name" value="UPF0102 PROTEIN YRAN"/>
    <property type="match status" value="1"/>
</dbReference>
<dbReference type="PANTHER" id="PTHR34039:SF1">
    <property type="entry name" value="UPF0102 PROTEIN YRAN"/>
    <property type="match status" value="1"/>
</dbReference>
<dbReference type="Pfam" id="PF02021">
    <property type="entry name" value="UPF0102"/>
    <property type="match status" value="1"/>
</dbReference>
<dbReference type="SUPFAM" id="SSF52980">
    <property type="entry name" value="Restriction endonuclease-like"/>
    <property type="match status" value="1"/>
</dbReference>
<protein>
    <recommendedName>
        <fullName evidence="1">UPF0102 protein Franean1_1156</fullName>
    </recommendedName>
</protein>
<sequence>MRVSQRLGRFGEDVAARHLSADGAEILARNWRCRDGEIDIVARHGDTLVFCEVKTRSGADYGSGPDAVVGRKAARIRRLAVRWLAEHPHPPAIIRFDVLSVYRERQGSVRVEHRRGAF</sequence>
<proteinExistence type="inferred from homology"/>
<evidence type="ECO:0000255" key="1">
    <source>
        <dbReference type="HAMAP-Rule" id="MF_00048"/>
    </source>
</evidence>
<organism>
    <name type="scientific">Parafrankia sp. (strain EAN1pec)</name>
    <dbReference type="NCBI Taxonomy" id="298653"/>
    <lineage>
        <taxon>Bacteria</taxon>
        <taxon>Bacillati</taxon>
        <taxon>Actinomycetota</taxon>
        <taxon>Actinomycetes</taxon>
        <taxon>Frankiales</taxon>
        <taxon>Frankiaceae</taxon>
        <taxon>Parafrankia</taxon>
    </lineage>
</organism>
<gene>
    <name type="ordered locus">Franean1_1156</name>
</gene>
<comment type="similarity">
    <text evidence="1">Belongs to the UPF0102 family.</text>
</comment>
<reference key="1">
    <citation type="journal article" date="2007" name="Genome Res.">
        <title>Genome characteristics of facultatively symbiotic Frankia sp. strains reflect host range and host plant biogeography.</title>
        <authorList>
            <person name="Normand P."/>
            <person name="Lapierre P."/>
            <person name="Tisa L.S."/>
            <person name="Gogarten J.P."/>
            <person name="Alloisio N."/>
            <person name="Bagnarol E."/>
            <person name="Bassi C.A."/>
            <person name="Berry A.M."/>
            <person name="Bickhart D.M."/>
            <person name="Choisne N."/>
            <person name="Couloux A."/>
            <person name="Cournoyer B."/>
            <person name="Cruveiller S."/>
            <person name="Daubin V."/>
            <person name="Demange N."/>
            <person name="Francino M.P."/>
            <person name="Goltsman E."/>
            <person name="Huang Y."/>
            <person name="Kopp O.R."/>
            <person name="Labarre L."/>
            <person name="Lapidus A."/>
            <person name="Lavire C."/>
            <person name="Marechal J."/>
            <person name="Martinez M."/>
            <person name="Mastronunzio J.E."/>
            <person name="Mullin B.C."/>
            <person name="Niemann J."/>
            <person name="Pujic P."/>
            <person name="Rawnsley T."/>
            <person name="Rouy Z."/>
            <person name="Schenowitz C."/>
            <person name="Sellstedt A."/>
            <person name="Tavares F."/>
            <person name="Tomkins J.P."/>
            <person name="Vallenet D."/>
            <person name="Valverde C."/>
            <person name="Wall L.G."/>
            <person name="Wang Y."/>
            <person name="Medigue C."/>
            <person name="Benson D.R."/>
        </authorList>
    </citation>
    <scope>NUCLEOTIDE SEQUENCE [LARGE SCALE GENOMIC DNA]</scope>
    <source>
        <strain>EAN1pec</strain>
    </source>
</reference>